<keyword id="KW-0007">Acetylation</keyword>
<keyword id="KW-0227">DNA damage</keyword>
<keyword id="KW-0234">DNA repair</keyword>
<keyword id="KW-0235">DNA replication</keyword>
<keyword id="KW-0255">Endonuclease</keyword>
<keyword id="KW-0269">Exonuclease</keyword>
<keyword id="KW-0378">Hydrolase</keyword>
<keyword id="KW-0460">Magnesium</keyword>
<keyword id="KW-0479">Metal-binding</keyword>
<keyword id="KW-0488">Methylation</keyword>
<keyword id="KW-0496">Mitochondrion</keyword>
<keyword id="KW-0540">Nuclease</keyword>
<keyword id="KW-0539">Nucleus</keyword>
<keyword id="KW-0597">Phosphoprotein</keyword>
<keyword id="KW-1185">Reference proteome</keyword>
<gene>
    <name evidence="2" type="primary">FEN1</name>
</gene>
<name>FEN1_SHEEP</name>
<sequence length="380" mass="42676">MGIQGLAKLIADVAPSAIRENDIKSYFGRKVAIDASMSIYQFLIAVRQGGDVLQNEEGETTSHLMGMFYRTIRMMENGIKPVYVFDGKPPQLKSGELAKRSERRAEAEKQLQQAQAAGAETEVEKFTKRLVKVTKQHNDECKHLLSLMGIPYLDAPSEAEASCAALVKAGKVYAAATEDMDCLTFGSPVLMRHLTASEAKKLPIQEFHLSRILQELGLNQEQFVDLCILLGSDYCESIRGIGPKRAVDLIQKHKSIEEIVRRLDPNKYPVPENWLHKEAQQLFLEPEVLDPESVELKWSEPNEEELVRFMCGEKQFSEERIRSGVRRLSKSRQGSTQGRLDDFFKVTGSLSSAKRKEPEPKGAAKKKQRLGPAGKFKRGK</sequence>
<dbReference type="EC" id="3.1.-.-" evidence="2"/>
<dbReference type="EMBL" id="GQ221048">
    <property type="protein sequence ID" value="ACV04829.1"/>
    <property type="molecule type" value="mRNA"/>
</dbReference>
<dbReference type="RefSeq" id="NP_001159668.1">
    <property type="nucleotide sequence ID" value="NM_001166196.1"/>
</dbReference>
<dbReference type="SMR" id="C8BKD0"/>
<dbReference type="STRING" id="9940.ENSOARP00000016769"/>
<dbReference type="PaxDb" id="9940-ENSOARP00000016769"/>
<dbReference type="GeneID" id="100307042"/>
<dbReference type="KEGG" id="oas:100307042"/>
<dbReference type="CTD" id="2237"/>
<dbReference type="eggNOG" id="KOG2519">
    <property type="taxonomic scope" value="Eukaryota"/>
</dbReference>
<dbReference type="OrthoDB" id="1937206at2759"/>
<dbReference type="Proteomes" id="UP000002356">
    <property type="component" value="Unplaced"/>
</dbReference>
<dbReference type="GO" id="GO:0005739">
    <property type="term" value="C:mitochondrion"/>
    <property type="evidence" value="ECO:0007669"/>
    <property type="project" value="UniProtKB-SubCell"/>
</dbReference>
<dbReference type="GO" id="GO:0005730">
    <property type="term" value="C:nucleolus"/>
    <property type="evidence" value="ECO:0007669"/>
    <property type="project" value="UniProtKB-SubCell"/>
</dbReference>
<dbReference type="GO" id="GO:0005654">
    <property type="term" value="C:nucleoplasm"/>
    <property type="evidence" value="ECO:0007669"/>
    <property type="project" value="UniProtKB-SubCell"/>
</dbReference>
<dbReference type="GO" id="GO:0005634">
    <property type="term" value="C:nucleus"/>
    <property type="evidence" value="ECO:0000250"/>
    <property type="project" value="UniProtKB"/>
</dbReference>
<dbReference type="GO" id="GO:0008409">
    <property type="term" value="F:5'-3' exonuclease activity"/>
    <property type="evidence" value="ECO:0007669"/>
    <property type="project" value="UniProtKB-UniRule"/>
</dbReference>
<dbReference type="GO" id="GO:0017108">
    <property type="term" value="F:5'-flap endonuclease activity"/>
    <property type="evidence" value="ECO:0007669"/>
    <property type="project" value="UniProtKB-UniRule"/>
</dbReference>
<dbReference type="GO" id="GO:0003677">
    <property type="term" value="F:DNA binding"/>
    <property type="evidence" value="ECO:0007669"/>
    <property type="project" value="UniProtKB-UniRule"/>
</dbReference>
<dbReference type="GO" id="GO:0000287">
    <property type="term" value="F:magnesium ion binding"/>
    <property type="evidence" value="ECO:0007669"/>
    <property type="project" value="UniProtKB-UniRule"/>
</dbReference>
<dbReference type="GO" id="GO:0030145">
    <property type="term" value="F:manganese ion binding"/>
    <property type="evidence" value="ECO:0007669"/>
    <property type="project" value="TreeGrafter"/>
</dbReference>
<dbReference type="GO" id="GO:0004523">
    <property type="term" value="F:RNA-DNA hybrid ribonuclease activity"/>
    <property type="evidence" value="ECO:0007669"/>
    <property type="project" value="TreeGrafter"/>
</dbReference>
<dbReference type="GO" id="GO:0006284">
    <property type="term" value="P:base-excision repair"/>
    <property type="evidence" value="ECO:0007669"/>
    <property type="project" value="UniProtKB-UniRule"/>
</dbReference>
<dbReference type="GO" id="GO:0043137">
    <property type="term" value="P:DNA replication, removal of RNA primer"/>
    <property type="evidence" value="ECO:0007669"/>
    <property type="project" value="UniProtKB-UniRule"/>
</dbReference>
<dbReference type="CDD" id="cd09907">
    <property type="entry name" value="H3TH_FEN1-Euk"/>
    <property type="match status" value="1"/>
</dbReference>
<dbReference type="CDD" id="cd09867">
    <property type="entry name" value="PIN_FEN1"/>
    <property type="match status" value="1"/>
</dbReference>
<dbReference type="FunFam" id="1.10.150.20:FF:000009">
    <property type="entry name" value="Flap endonuclease 1"/>
    <property type="match status" value="1"/>
</dbReference>
<dbReference type="FunFam" id="3.40.50.1010:FF:000003">
    <property type="entry name" value="Flap endonuclease 1"/>
    <property type="match status" value="1"/>
</dbReference>
<dbReference type="Gene3D" id="1.10.150.20">
    <property type="entry name" value="5' to 3' exonuclease, C-terminal subdomain"/>
    <property type="match status" value="1"/>
</dbReference>
<dbReference type="Gene3D" id="3.40.50.1010">
    <property type="entry name" value="5'-nuclease"/>
    <property type="match status" value="1"/>
</dbReference>
<dbReference type="HAMAP" id="MF_00614">
    <property type="entry name" value="Fen"/>
    <property type="match status" value="1"/>
</dbReference>
<dbReference type="InterPro" id="IPR036279">
    <property type="entry name" value="5-3_exonuclease_C_sf"/>
</dbReference>
<dbReference type="InterPro" id="IPR023426">
    <property type="entry name" value="Flap_endonuc"/>
</dbReference>
<dbReference type="InterPro" id="IPR008918">
    <property type="entry name" value="HhH2"/>
</dbReference>
<dbReference type="InterPro" id="IPR029060">
    <property type="entry name" value="PIN-like_dom_sf"/>
</dbReference>
<dbReference type="InterPro" id="IPR006086">
    <property type="entry name" value="XPG-I_dom"/>
</dbReference>
<dbReference type="InterPro" id="IPR006084">
    <property type="entry name" value="XPG/Rad2"/>
</dbReference>
<dbReference type="InterPro" id="IPR019974">
    <property type="entry name" value="XPG_CS"/>
</dbReference>
<dbReference type="InterPro" id="IPR006085">
    <property type="entry name" value="XPG_DNA_repair_N"/>
</dbReference>
<dbReference type="PANTHER" id="PTHR11081:SF9">
    <property type="entry name" value="FLAP ENDONUCLEASE 1"/>
    <property type="match status" value="1"/>
</dbReference>
<dbReference type="PANTHER" id="PTHR11081">
    <property type="entry name" value="FLAP ENDONUCLEASE FAMILY MEMBER"/>
    <property type="match status" value="1"/>
</dbReference>
<dbReference type="Pfam" id="PF00867">
    <property type="entry name" value="XPG_I"/>
    <property type="match status" value="1"/>
</dbReference>
<dbReference type="Pfam" id="PF00752">
    <property type="entry name" value="XPG_N"/>
    <property type="match status" value="1"/>
</dbReference>
<dbReference type="PRINTS" id="PR00853">
    <property type="entry name" value="XPGRADSUPER"/>
</dbReference>
<dbReference type="SMART" id="SM00279">
    <property type="entry name" value="HhH2"/>
    <property type="match status" value="1"/>
</dbReference>
<dbReference type="SMART" id="SM00484">
    <property type="entry name" value="XPGI"/>
    <property type="match status" value="1"/>
</dbReference>
<dbReference type="SMART" id="SM00485">
    <property type="entry name" value="XPGN"/>
    <property type="match status" value="1"/>
</dbReference>
<dbReference type="SUPFAM" id="SSF47807">
    <property type="entry name" value="5' to 3' exonuclease, C-terminal subdomain"/>
    <property type="match status" value="1"/>
</dbReference>
<dbReference type="SUPFAM" id="SSF88723">
    <property type="entry name" value="PIN domain-like"/>
    <property type="match status" value="1"/>
</dbReference>
<dbReference type="PROSITE" id="PS00841">
    <property type="entry name" value="XPG_1"/>
    <property type="match status" value="1"/>
</dbReference>
<dbReference type="PROSITE" id="PS00842">
    <property type="entry name" value="XPG_2"/>
    <property type="match status" value="1"/>
</dbReference>
<proteinExistence type="evidence at transcript level"/>
<feature type="chain" id="PRO_0000403484" description="Flap endonuclease 1">
    <location>
        <begin position="1"/>
        <end position="380"/>
    </location>
</feature>
<feature type="region of interest" description="N-domain">
    <location>
        <begin position="1"/>
        <end position="104"/>
    </location>
</feature>
<feature type="region of interest" description="I-domain">
    <location>
        <begin position="122"/>
        <end position="253"/>
    </location>
</feature>
<feature type="region of interest" description="Interaction with PCNA" evidence="2">
    <location>
        <begin position="336"/>
        <end position="344"/>
    </location>
</feature>
<feature type="region of interest" description="Disordered" evidence="3">
    <location>
        <begin position="349"/>
        <end position="380"/>
    </location>
</feature>
<feature type="compositionally biased region" description="Basic residues" evidence="3">
    <location>
        <begin position="363"/>
        <end position="380"/>
    </location>
</feature>
<feature type="binding site" evidence="2">
    <location>
        <position position="34"/>
    </location>
    <ligand>
        <name>Mg(2+)</name>
        <dbReference type="ChEBI" id="CHEBI:18420"/>
        <label>1</label>
    </ligand>
</feature>
<feature type="binding site" evidence="2">
    <location>
        <position position="47"/>
    </location>
    <ligand>
        <name>DNA</name>
        <dbReference type="ChEBI" id="CHEBI:16991"/>
    </ligand>
</feature>
<feature type="binding site" evidence="2">
    <location>
        <position position="70"/>
    </location>
    <ligand>
        <name>DNA</name>
        <dbReference type="ChEBI" id="CHEBI:16991"/>
    </ligand>
</feature>
<feature type="binding site" evidence="2">
    <location>
        <position position="86"/>
    </location>
    <ligand>
        <name>Mg(2+)</name>
        <dbReference type="ChEBI" id="CHEBI:18420"/>
        <label>1</label>
    </ligand>
</feature>
<feature type="binding site" evidence="2">
    <location>
        <position position="158"/>
    </location>
    <ligand>
        <name>DNA</name>
        <dbReference type="ChEBI" id="CHEBI:16991"/>
    </ligand>
</feature>
<feature type="binding site" evidence="2">
    <location>
        <position position="158"/>
    </location>
    <ligand>
        <name>Mg(2+)</name>
        <dbReference type="ChEBI" id="CHEBI:18420"/>
        <label>1</label>
    </ligand>
</feature>
<feature type="binding site" evidence="2">
    <location>
        <position position="160"/>
    </location>
    <ligand>
        <name>Mg(2+)</name>
        <dbReference type="ChEBI" id="CHEBI:18420"/>
        <label>1</label>
    </ligand>
</feature>
<feature type="binding site" evidence="2">
    <location>
        <position position="179"/>
    </location>
    <ligand>
        <name>Mg(2+)</name>
        <dbReference type="ChEBI" id="CHEBI:18420"/>
        <label>2</label>
    </ligand>
</feature>
<feature type="binding site" evidence="2">
    <location>
        <position position="181"/>
    </location>
    <ligand>
        <name>Mg(2+)</name>
        <dbReference type="ChEBI" id="CHEBI:18420"/>
        <label>2</label>
    </ligand>
</feature>
<feature type="binding site" evidence="2">
    <location>
        <position position="231"/>
    </location>
    <ligand>
        <name>DNA</name>
        <dbReference type="ChEBI" id="CHEBI:16991"/>
    </ligand>
</feature>
<feature type="binding site" evidence="2">
    <location>
        <position position="233"/>
    </location>
    <ligand>
        <name>DNA</name>
        <dbReference type="ChEBI" id="CHEBI:16991"/>
    </ligand>
</feature>
<feature type="binding site" evidence="2">
    <location>
        <position position="233"/>
    </location>
    <ligand>
        <name>Mg(2+)</name>
        <dbReference type="ChEBI" id="CHEBI:18420"/>
        <label>2</label>
    </ligand>
</feature>
<feature type="modified residue" description="Symmetric dimethylarginine; by PRMT5" evidence="1 2">
    <location>
        <position position="19"/>
    </location>
</feature>
<feature type="modified residue" description="N6-acetyllysine" evidence="1 2">
    <location>
        <position position="80"/>
    </location>
</feature>
<feature type="modified residue" description="Symmetric dimethylarginine; by PRMT5" evidence="1 2">
    <location>
        <position position="100"/>
    </location>
</feature>
<feature type="modified residue" description="Symmetric dimethylarginine; by PRMT5" evidence="1 2">
    <location>
        <position position="104"/>
    </location>
</feature>
<feature type="modified residue" description="Phosphoserine; by CDK2" evidence="1 2">
    <location>
        <position position="187"/>
    </location>
</feature>
<feature type="modified residue" description="Symmetric dimethylarginine; by PRMT5" evidence="1 2">
    <location>
        <position position="192"/>
    </location>
</feature>
<feature type="modified residue" description="Phosphoserine" evidence="1">
    <location>
        <position position="197"/>
    </location>
</feature>
<feature type="modified residue" description="Phosphoserine" evidence="1">
    <location>
        <position position="255"/>
    </location>
</feature>
<feature type="modified residue" description="Phosphoserine" evidence="1">
    <location>
        <position position="293"/>
    </location>
</feature>
<feature type="modified residue" description="Phosphoserine" evidence="1">
    <location>
        <position position="335"/>
    </location>
</feature>
<feature type="modified residue" description="Phosphothreonine" evidence="1">
    <location>
        <position position="336"/>
    </location>
</feature>
<feature type="modified residue" description="N6-acetyllysine" evidence="1 2">
    <location>
        <position position="354"/>
    </location>
</feature>
<feature type="modified residue" description="N6-acetyllysine" evidence="1 2">
    <location>
        <position position="375"/>
    </location>
</feature>
<feature type="modified residue" description="N6-acetyllysine" evidence="1 2">
    <location>
        <position position="377"/>
    </location>
</feature>
<feature type="modified residue" description="N6-acetyllysine" evidence="1 2">
    <location>
        <position position="380"/>
    </location>
</feature>
<organism>
    <name type="scientific">Ovis aries</name>
    <name type="common">Sheep</name>
    <dbReference type="NCBI Taxonomy" id="9940"/>
    <lineage>
        <taxon>Eukaryota</taxon>
        <taxon>Metazoa</taxon>
        <taxon>Chordata</taxon>
        <taxon>Craniata</taxon>
        <taxon>Vertebrata</taxon>
        <taxon>Euteleostomi</taxon>
        <taxon>Mammalia</taxon>
        <taxon>Eutheria</taxon>
        <taxon>Laurasiatheria</taxon>
        <taxon>Artiodactyla</taxon>
        <taxon>Ruminantia</taxon>
        <taxon>Pecora</taxon>
        <taxon>Bovidae</taxon>
        <taxon>Caprinae</taxon>
        <taxon>Ovis</taxon>
    </lineage>
</organism>
<accession>C8BKD0</accession>
<reference key="1">
    <citation type="submission" date="2009-05" db="EMBL/GenBank/DDBJ databases">
        <authorList>
            <person name="Liu G.Y."/>
        </authorList>
    </citation>
    <scope>NUCLEOTIDE SEQUENCE [MRNA]</scope>
</reference>
<evidence type="ECO:0000250" key="1">
    <source>
        <dbReference type="UniProtKB" id="P39748"/>
    </source>
</evidence>
<evidence type="ECO:0000255" key="2">
    <source>
        <dbReference type="HAMAP-Rule" id="MF_03140"/>
    </source>
</evidence>
<evidence type="ECO:0000256" key="3">
    <source>
        <dbReference type="SAM" id="MobiDB-lite"/>
    </source>
</evidence>
<comment type="function">
    <text evidence="2">Structure-specific nuclease with 5'-flap endonuclease and 5'-3' exonuclease activities involved in DNA replication and repair. During DNA replication, cleaves the 5'-overhanging flap structure that is generated by displacement synthesis when DNA polymerase encounters the 5'-end of a downstream Okazaki fragment. It enters the flap from the 5'-end and then tracks to cleave the flap base, leaving a nick for ligation. Also involved in the long patch base excision repair (LP-BER) pathway, by cleaving within the apurinic/apyrimidinic (AP) site-terminated flap. Acts as a genome stabilization factor that prevents flaps from equilibrating into structures that lead to duplications and deletions. Also possesses 5'-3' exonuclease activity on nicked or gapped double-stranded DNA, and exhibits RNase H activity. Also involved in replication and repair of rDNA and in repairing mitochondrial DNA.</text>
</comment>
<comment type="cofactor">
    <cofactor evidence="2">
        <name>Mg(2+)</name>
        <dbReference type="ChEBI" id="CHEBI:18420"/>
    </cofactor>
    <text evidence="2">Binds 2 magnesium ions per subunit. They probably participate in the reaction catalyzed by the enzyme. May bind an additional third magnesium ion after substrate binding.</text>
</comment>
<comment type="subunit">
    <text evidence="1 2">Interacts with PCNA. Three molecules of FEN1 bind to one PCNA trimer with each molecule binding to one PCNA monomer. PCNA stimulates the nuclease activity without altering cleavage specificity. The C-terminal domain binds EP300; can bind simultaneously to both PCNA and EP300. Interacts with DDX11; this interaction is direct and increases flap endonuclease activity of FEN1. Interacts with WDR4; regulating its endonuclease activity. Interacts with POLB.</text>
</comment>
<comment type="subcellular location">
    <subcellularLocation>
        <location evidence="2">Nucleus</location>
        <location evidence="2">Nucleolus</location>
    </subcellularLocation>
    <subcellularLocation>
        <location evidence="2">Nucleus</location>
        <location evidence="2">Nucleoplasm</location>
    </subcellularLocation>
    <subcellularLocation>
        <location evidence="2">Mitochondrion</location>
    </subcellularLocation>
    <text evidence="2">Resides mostly in the nucleoli and relocalizes to the nucleoplasm upon DNA damage.</text>
</comment>
<comment type="PTM">
    <text evidence="2">Acetylated by EP300. Acetylation inhibits both endonuclease and exonuclease activity. Acetylation also reduces DNA-binding activity but does not affect interaction with PCNA or EP300.</text>
</comment>
<comment type="PTM">
    <text evidence="2">Phosphorylation upon DNA damage induces relocalization to the nuclear plasma. Phosphorylation at Ser-187 by CDK2 occurs during late S-phase and results in dissociation from PCNA.</text>
</comment>
<comment type="PTM">
    <text evidence="2">Methylation at Arg-192 by PRMT5 impedes Ser-187 phosphorylation and increases interaction with PCNA.</text>
</comment>
<comment type="similarity">
    <text evidence="2">Belongs to the XPG/RAD2 endonuclease family. FEN1 subfamily.</text>
</comment>
<protein>
    <recommendedName>
        <fullName evidence="2">Flap endonuclease 1</fullName>
        <shortName evidence="2">FEN-1</shortName>
        <ecNumber evidence="2">3.1.-.-</ecNumber>
    </recommendedName>
    <alternativeName>
        <fullName evidence="2">Flap structure-specific endonuclease 1</fullName>
    </alternativeName>
</protein>